<dbReference type="EMBL" id="FO080185">
    <property type="protein sequence ID" value="CCD61824.1"/>
    <property type="molecule type" value="Genomic_DNA"/>
</dbReference>
<dbReference type="PIR" id="G88504">
    <property type="entry name" value="G88504"/>
</dbReference>
<dbReference type="RefSeq" id="NP_498608.1">
    <property type="nucleotide sequence ID" value="NM_066207.5"/>
</dbReference>
<dbReference type="SMR" id="Q10952"/>
<dbReference type="BioGRID" id="41244">
    <property type="interactions" value="1"/>
</dbReference>
<dbReference type="FunCoup" id="Q10952">
    <property type="interactions" value="52"/>
</dbReference>
<dbReference type="STRING" id="6239.B0361.9.1"/>
<dbReference type="PaxDb" id="6239-B0361.9"/>
<dbReference type="PeptideAtlas" id="Q10952"/>
<dbReference type="EnsemblMetazoa" id="B0361.9.1">
    <property type="protein sequence ID" value="B0361.9.1"/>
    <property type="gene ID" value="WBGene00015163"/>
</dbReference>
<dbReference type="GeneID" id="176033"/>
<dbReference type="KEGG" id="cel:CELE_B0361.9"/>
<dbReference type="UCSC" id="B0361.9">
    <property type="organism name" value="c. elegans"/>
</dbReference>
<dbReference type="AGR" id="WB:WBGene00015163"/>
<dbReference type="CTD" id="176033"/>
<dbReference type="WormBase" id="B0361.9">
    <property type="protein sequence ID" value="CE00838"/>
    <property type="gene ID" value="WBGene00015163"/>
</dbReference>
<dbReference type="eggNOG" id="ENOG502SP4T">
    <property type="taxonomic scope" value="Eukaryota"/>
</dbReference>
<dbReference type="HOGENOM" id="CLU_1391367_0_0_1"/>
<dbReference type="InParanoid" id="Q10952"/>
<dbReference type="OMA" id="YFENIQC"/>
<dbReference type="OrthoDB" id="5785423at2759"/>
<dbReference type="PRO" id="PR:Q10952"/>
<dbReference type="Proteomes" id="UP000001940">
    <property type="component" value="Chromosome III"/>
</dbReference>
<dbReference type="Bgee" id="WBGene00015163">
    <property type="expression patterns" value="Expressed in larva and 4 other cell types or tissues"/>
</dbReference>
<dbReference type="Gene3D" id="3.50.4.10">
    <property type="entry name" value="Hepatocyte Growth Factor"/>
    <property type="match status" value="1"/>
</dbReference>
<dbReference type="InterPro" id="IPR003609">
    <property type="entry name" value="Pan_app"/>
</dbReference>
<dbReference type="Pfam" id="PF00024">
    <property type="entry name" value="PAN_1"/>
    <property type="match status" value="1"/>
</dbReference>
<dbReference type="SMART" id="SM00473">
    <property type="entry name" value="PAN_AP"/>
    <property type="match status" value="1"/>
</dbReference>
<dbReference type="SUPFAM" id="SSF57414">
    <property type="entry name" value="Hairpin loop containing domain-like"/>
    <property type="match status" value="1"/>
</dbReference>
<dbReference type="PROSITE" id="PS50948">
    <property type="entry name" value="PAN"/>
    <property type="match status" value="1"/>
</dbReference>
<organism>
    <name type="scientific">Caenorhabditis elegans</name>
    <dbReference type="NCBI Taxonomy" id="6239"/>
    <lineage>
        <taxon>Eukaryota</taxon>
        <taxon>Metazoa</taxon>
        <taxon>Ecdysozoa</taxon>
        <taxon>Nematoda</taxon>
        <taxon>Chromadorea</taxon>
        <taxon>Rhabditida</taxon>
        <taxon>Rhabditina</taxon>
        <taxon>Rhabditomorpha</taxon>
        <taxon>Rhabditoidea</taxon>
        <taxon>Rhabditidae</taxon>
        <taxon>Peloderinae</taxon>
        <taxon>Caenorhabditis</taxon>
    </lineage>
</organism>
<evidence type="ECO:0000255" key="1"/>
<evidence type="ECO:0000255" key="2">
    <source>
        <dbReference type="PROSITE-ProRule" id="PRU00315"/>
    </source>
</evidence>
<gene>
    <name type="ORF">B0361.9</name>
</gene>
<sequence>MFVLSIALLSCTTLCAATTEWWGDLRAHLNPARQAPFYDVTYDEKVNVCPQGLHADAIPEYVYFGTMLATMTVDEHDQCLQKCAEKPRCKAVNFFHPFAYQEKGFCELLTEGQLDNPSLMRPFRKATYYEKIRCRELDDVEDVEEAAPIGSEITEKLPEDMAREKKLDMSKLMKKLSAKVKEFNGGAGGFRAAR</sequence>
<reference key="1">
    <citation type="journal article" date="1998" name="Science">
        <title>Genome sequence of the nematode C. elegans: a platform for investigating biology.</title>
        <authorList>
            <consortium name="The C. elegans sequencing consortium"/>
        </authorList>
    </citation>
    <scope>NUCLEOTIDE SEQUENCE [LARGE SCALE GENOMIC DNA]</scope>
    <source>
        <strain>Bristol N2</strain>
    </source>
</reference>
<proteinExistence type="inferred from homology"/>
<feature type="signal peptide" evidence="1">
    <location>
        <begin position="1"/>
        <end position="15"/>
    </location>
</feature>
<feature type="chain" id="PRO_0000014272" description="Uncharacterized protein B0361.9">
    <location>
        <begin position="16"/>
        <end position="194"/>
    </location>
</feature>
<feature type="domain" description="PAN" evidence="2">
    <location>
        <begin position="49"/>
        <end position="134"/>
    </location>
</feature>
<feature type="disulfide bond" evidence="2">
    <location>
        <begin position="49"/>
        <end position="134"/>
    </location>
</feature>
<feature type="disulfide bond" evidence="2">
    <location>
        <begin position="79"/>
        <end position="106"/>
    </location>
</feature>
<keyword id="KW-1015">Disulfide bond</keyword>
<keyword id="KW-1185">Reference proteome</keyword>
<keyword id="KW-0732">Signal</keyword>
<name>YMP9_CAEEL</name>
<protein>
    <recommendedName>
        <fullName>Uncharacterized protein B0361.9</fullName>
    </recommendedName>
</protein>
<accession>Q10952</accession>